<feature type="chain" id="PRO_0000367671" description="Glutamate--tRNA ligase">
    <location>
        <begin position="1"/>
        <end position="481"/>
    </location>
</feature>
<feature type="short sequence motif" description="'HIGH' region" evidence="1">
    <location>
        <begin position="10"/>
        <end position="20"/>
    </location>
</feature>
<feature type="short sequence motif" description="'KMSKS' region" evidence="1">
    <location>
        <begin position="251"/>
        <end position="255"/>
    </location>
</feature>
<feature type="binding site" evidence="1">
    <location>
        <position position="254"/>
    </location>
    <ligand>
        <name>ATP</name>
        <dbReference type="ChEBI" id="CHEBI:30616"/>
    </ligand>
</feature>
<reference key="1">
    <citation type="submission" date="2008-04" db="EMBL/GenBank/DDBJ databases">
        <title>Complete sequence of chromosome of Exiguobacterium sibiricum 255-15.</title>
        <authorList>
            <consortium name="US DOE Joint Genome Institute"/>
            <person name="Copeland A."/>
            <person name="Lucas S."/>
            <person name="Lapidus A."/>
            <person name="Glavina del Rio T."/>
            <person name="Dalin E."/>
            <person name="Tice H."/>
            <person name="Bruce D."/>
            <person name="Goodwin L."/>
            <person name="Pitluck S."/>
            <person name="Kiss H."/>
            <person name="Chertkov O."/>
            <person name="Monk C."/>
            <person name="Brettin T."/>
            <person name="Detter J.C."/>
            <person name="Han C."/>
            <person name="Kuske C.R."/>
            <person name="Schmutz J."/>
            <person name="Larimer F."/>
            <person name="Land M."/>
            <person name="Hauser L."/>
            <person name="Kyrpides N."/>
            <person name="Mikhailova N."/>
            <person name="Vishnivetskaya T."/>
            <person name="Rodrigues D.F."/>
            <person name="Gilichinsky D."/>
            <person name="Tiedje J."/>
            <person name="Richardson P."/>
        </authorList>
    </citation>
    <scope>NUCLEOTIDE SEQUENCE [LARGE SCALE GENOMIC DNA]</scope>
    <source>
        <strain>DSM 17290 / CCUG 55495 / CIP 109462 / JCM 13490 / 255-15</strain>
    </source>
</reference>
<protein>
    <recommendedName>
        <fullName evidence="1">Glutamate--tRNA ligase</fullName>
        <ecNumber evidence="1">6.1.1.17</ecNumber>
    </recommendedName>
    <alternativeName>
        <fullName evidence="1">Glutamyl-tRNA synthetase</fullName>
        <shortName evidence="1">GluRS</shortName>
    </alternativeName>
</protein>
<dbReference type="EC" id="6.1.1.17" evidence="1"/>
<dbReference type="EMBL" id="CP001022">
    <property type="protein sequence ID" value="ACB59560.1"/>
    <property type="molecule type" value="Genomic_DNA"/>
</dbReference>
<dbReference type="RefSeq" id="WP_012368986.1">
    <property type="nucleotide sequence ID" value="NC_010556.1"/>
</dbReference>
<dbReference type="SMR" id="B1YGS7"/>
<dbReference type="STRING" id="262543.Exig_0073"/>
<dbReference type="KEGG" id="esi:Exig_0073"/>
<dbReference type="eggNOG" id="COG0008">
    <property type="taxonomic scope" value="Bacteria"/>
</dbReference>
<dbReference type="HOGENOM" id="CLU_015768_6_1_9"/>
<dbReference type="OrthoDB" id="9807503at2"/>
<dbReference type="Proteomes" id="UP000001681">
    <property type="component" value="Chromosome"/>
</dbReference>
<dbReference type="GO" id="GO:0005829">
    <property type="term" value="C:cytosol"/>
    <property type="evidence" value="ECO:0007669"/>
    <property type="project" value="TreeGrafter"/>
</dbReference>
<dbReference type="GO" id="GO:0005524">
    <property type="term" value="F:ATP binding"/>
    <property type="evidence" value="ECO:0007669"/>
    <property type="project" value="UniProtKB-UniRule"/>
</dbReference>
<dbReference type="GO" id="GO:0004818">
    <property type="term" value="F:glutamate-tRNA ligase activity"/>
    <property type="evidence" value="ECO:0007669"/>
    <property type="project" value="UniProtKB-UniRule"/>
</dbReference>
<dbReference type="GO" id="GO:0000049">
    <property type="term" value="F:tRNA binding"/>
    <property type="evidence" value="ECO:0007669"/>
    <property type="project" value="InterPro"/>
</dbReference>
<dbReference type="GO" id="GO:0008270">
    <property type="term" value="F:zinc ion binding"/>
    <property type="evidence" value="ECO:0007669"/>
    <property type="project" value="InterPro"/>
</dbReference>
<dbReference type="GO" id="GO:0006424">
    <property type="term" value="P:glutamyl-tRNA aminoacylation"/>
    <property type="evidence" value="ECO:0007669"/>
    <property type="project" value="UniProtKB-UniRule"/>
</dbReference>
<dbReference type="CDD" id="cd00808">
    <property type="entry name" value="GluRS_core"/>
    <property type="match status" value="1"/>
</dbReference>
<dbReference type="FunFam" id="1.10.10.350:FF:000002">
    <property type="entry name" value="Glutamate--tRNA ligase"/>
    <property type="match status" value="1"/>
</dbReference>
<dbReference type="FunFam" id="3.40.50.620:FF:000007">
    <property type="entry name" value="Glutamate--tRNA ligase"/>
    <property type="match status" value="1"/>
</dbReference>
<dbReference type="Gene3D" id="1.10.10.350">
    <property type="match status" value="1"/>
</dbReference>
<dbReference type="Gene3D" id="3.40.50.620">
    <property type="entry name" value="HUPs"/>
    <property type="match status" value="1"/>
</dbReference>
<dbReference type="HAMAP" id="MF_00022">
    <property type="entry name" value="Glu_tRNA_synth_type1"/>
    <property type="match status" value="1"/>
</dbReference>
<dbReference type="InterPro" id="IPR045462">
    <property type="entry name" value="aa-tRNA-synth_I_cd-bd"/>
</dbReference>
<dbReference type="InterPro" id="IPR020751">
    <property type="entry name" value="aa-tRNA-synth_I_codon-bd_sub2"/>
</dbReference>
<dbReference type="InterPro" id="IPR001412">
    <property type="entry name" value="aa-tRNA-synth_I_CS"/>
</dbReference>
<dbReference type="InterPro" id="IPR008925">
    <property type="entry name" value="aa_tRNA-synth_I_cd-bd_sf"/>
</dbReference>
<dbReference type="InterPro" id="IPR004527">
    <property type="entry name" value="Glu-tRNA-ligase_bac/mito"/>
</dbReference>
<dbReference type="InterPro" id="IPR000924">
    <property type="entry name" value="Glu/Gln-tRNA-synth"/>
</dbReference>
<dbReference type="InterPro" id="IPR020058">
    <property type="entry name" value="Glu/Gln-tRNA-synth_Ib_cat-dom"/>
</dbReference>
<dbReference type="InterPro" id="IPR049940">
    <property type="entry name" value="GluQ/Sye"/>
</dbReference>
<dbReference type="InterPro" id="IPR033910">
    <property type="entry name" value="GluRS_core"/>
</dbReference>
<dbReference type="InterPro" id="IPR014729">
    <property type="entry name" value="Rossmann-like_a/b/a_fold"/>
</dbReference>
<dbReference type="NCBIfam" id="TIGR00464">
    <property type="entry name" value="gltX_bact"/>
    <property type="match status" value="1"/>
</dbReference>
<dbReference type="PANTHER" id="PTHR43311">
    <property type="entry name" value="GLUTAMATE--TRNA LIGASE"/>
    <property type="match status" value="1"/>
</dbReference>
<dbReference type="PANTHER" id="PTHR43311:SF2">
    <property type="entry name" value="GLUTAMATE--TRNA LIGASE, MITOCHONDRIAL-RELATED"/>
    <property type="match status" value="1"/>
</dbReference>
<dbReference type="Pfam" id="PF19269">
    <property type="entry name" value="Anticodon_2"/>
    <property type="match status" value="1"/>
</dbReference>
<dbReference type="Pfam" id="PF00749">
    <property type="entry name" value="tRNA-synt_1c"/>
    <property type="match status" value="1"/>
</dbReference>
<dbReference type="PRINTS" id="PR00987">
    <property type="entry name" value="TRNASYNTHGLU"/>
</dbReference>
<dbReference type="SUPFAM" id="SSF48163">
    <property type="entry name" value="An anticodon-binding domain of class I aminoacyl-tRNA synthetases"/>
    <property type="match status" value="1"/>
</dbReference>
<dbReference type="SUPFAM" id="SSF52374">
    <property type="entry name" value="Nucleotidylyl transferase"/>
    <property type="match status" value="1"/>
</dbReference>
<dbReference type="PROSITE" id="PS00178">
    <property type="entry name" value="AA_TRNA_LIGASE_I"/>
    <property type="match status" value="1"/>
</dbReference>
<organism>
    <name type="scientific">Exiguobacterium sibiricum (strain DSM 17290 / CCUG 55495 / CIP 109462 / JCM 13490 / 255-15)</name>
    <dbReference type="NCBI Taxonomy" id="262543"/>
    <lineage>
        <taxon>Bacteria</taxon>
        <taxon>Bacillati</taxon>
        <taxon>Bacillota</taxon>
        <taxon>Bacilli</taxon>
        <taxon>Bacillales</taxon>
        <taxon>Bacillales Family XII. Incertae Sedis</taxon>
        <taxon>Exiguobacterium</taxon>
    </lineage>
</organism>
<keyword id="KW-0030">Aminoacyl-tRNA synthetase</keyword>
<keyword id="KW-0067">ATP-binding</keyword>
<keyword id="KW-0963">Cytoplasm</keyword>
<keyword id="KW-0436">Ligase</keyword>
<keyword id="KW-0547">Nucleotide-binding</keyword>
<keyword id="KW-0648">Protein biosynthesis</keyword>
<keyword id="KW-1185">Reference proteome</keyword>
<comment type="function">
    <text evidence="1">Catalyzes the attachment of glutamate to tRNA(Glu) in a two-step reaction: glutamate is first activated by ATP to form Glu-AMP and then transferred to the acceptor end of tRNA(Glu).</text>
</comment>
<comment type="catalytic activity">
    <reaction evidence="1">
        <text>tRNA(Glu) + L-glutamate + ATP = L-glutamyl-tRNA(Glu) + AMP + diphosphate</text>
        <dbReference type="Rhea" id="RHEA:23540"/>
        <dbReference type="Rhea" id="RHEA-COMP:9663"/>
        <dbReference type="Rhea" id="RHEA-COMP:9680"/>
        <dbReference type="ChEBI" id="CHEBI:29985"/>
        <dbReference type="ChEBI" id="CHEBI:30616"/>
        <dbReference type="ChEBI" id="CHEBI:33019"/>
        <dbReference type="ChEBI" id="CHEBI:78442"/>
        <dbReference type="ChEBI" id="CHEBI:78520"/>
        <dbReference type="ChEBI" id="CHEBI:456215"/>
        <dbReference type="EC" id="6.1.1.17"/>
    </reaction>
</comment>
<comment type="subunit">
    <text evidence="1">Monomer.</text>
</comment>
<comment type="subcellular location">
    <subcellularLocation>
        <location evidence="1">Cytoplasm</location>
    </subcellularLocation>
</comment>
<comment type="similarity">
    <text evidence="1">Belongs to the class-I aminoacyl-tRNA synthetase family. Glutamate--tRNA ligase type 1 subfamily.</text>
</comment>
<proteinExistence type="inferred from homology"/>
<evidence type="ECO:0000255" key="1">
    <source>
        <dbReference type="HAMAP-Rule" id="MF_00022"/>
    </source>
</evidence>
<sequence length="481" mass="54905">MAEVRVRYAPSPTGHLHIGNARTALFNYLFARHAGGKMILRIEDTDQKRNIDGGVESQMKYLEWLGIDWDEGPGRGGEYGPYFQMERLDLYKKYTDELLEKGLAYRCYMTSEELEAEREAQIARGEAPRYSGAHRNLTQEQEEAFVAEGRTPSIRIRVPESVTYTWNDIVKEDVSFESKDFGDWVIVKKDGIPTYNFAVVVDDHLMAISHVLRGDDHISNTPKQMMIYDAFGWEYPTFGHMTLIVNEEHKKLSKRDQSIIQYIEQYKDLGYLPEALLNFVTLLGWSPVGEQEIFTKEEFIEIFDASRLSKSPAVFDQQKLAWINGQYMKHQSFEEVFEASLPFLQDAGRVSSEPTEEELVWAQNLVGLYREQMTHGAEIVELSEMFFEDELVYDEEANTVLAGETVPAVLSEFASQLRTLEEWTPEAIKGAIKATQKATGQKGKNLFMPIRVATTGQTHGPELPNTIQLLGKDRVLARLDA</sequence>
<accession>B1YGS7</accession>
<gene>
    <name evidence="1" type="primary">gltX</name>
    <name type="ordered locus">Exig_0073</name>
</gene>
<name>SYE_EXIS2</name>